<reference key="1">
    <citation type="submission" date="2008-05" db="EMBL/GenBank/DDBJ databases">
        <title>Genome sequence of Helicobacter pylori from the remote Amazon: traces of Asian ancestry of the first Americans.</title>
        <authorList>
            <person name="Kersulyte D."/>
            <person name="Kalia A."/>
            <person name="Gilman R.H."/>
            <person name="Berg D.E."/>
        </authorList>
    </citation>
    <scope>NUCLEOTIDE SEQUENCE [LARGE SCALE GENOMIC DNA]</scope>
    <source>
        <strain>Shi470</strain>
    </source>
</reference>
<proteinExistence type="inferred from homology"/>
<dbReference type="EC" id="6.1.1.17" evidence="1"/>
<dbReference type="EMBL" id="CP001072">
    <property type="protein sequence ID" value="ACD48166.1"/>
    <property type="molecule type" value="Genomic_DNA"/>
</dbReference>
<dbReference type="RefSeq" id="WP_000943295.1">
    <property type="nucleotide sequence ID" value="NC_010698.2"/>
</dbReference>
<dbReference type="SMR" id="B2UTI4"/>
<dbReference type="KEGG" id="hps:HPSH_03645"/>
<dbReference type="HOGENOM" id="CLU_015768_6_0_7"/>
<dbReference type="GO" id="GO:0005829">
    <property type="term" value="C:cytosol"/>
    <property type="evidence" value="ECO:0007669"/>
    <property type="project" value="TreeGrafter"/>
</dbReference>
<dbReference type="GO" id="GO:0005524">
    <property type="term" value="F:ATP binding"/>
    <property type="evidence" value="ECO:0007669"/>
    <property type="project" value="UniProtKB-UniRule"/>
</dbReference>
<dbReference type="GO" id="GO:0004818">
    <property type="term" value="F:glutamate-tRNA ligase activity"/>
    <property type="evidence" value="ECO:0007669"/>
    <property type="project" value="UniProtKB-UniRule"/>
</dbReference>
<dbReference type="GO" id="GO:0000049">
    <property type="term" value="F:tRNA binding"/>
    <property type="evidence" value="ECO:0007669"/>
    <property type="project" value="InterPro"/>
</dbReference>
<dbReference type="GO" id="GO:0006424">
    <property type="term" value="P:glutamyl-tRNA aminoacylation"/>
    <property type="evidence" value="ECO:0007669"/>
    <property type="project" value="UniProtKB-UniRule"/>
</dbReference>
<dbReference type="FunFam" id="3.40.50.620:FF:000007">
    <property type="entry name" value="Glutamate--tRNA ligase"/>
    <property type="match status" value="1"/>
</dbReference>
<dbReference type="Gene3D" id="1.10.10.350">
    <property type="match status" value="1"/>
</dbReference>
<dbReference type="Gene3D" id="3.40.50.620">
    <property type="entry name" value="HUPs"/>
    <property type="match status" value="1"/>
</dbReference>
<dbReference type="HAMAP" id="MF_00022">
    <property type="entry name" value="Glu_tRNA_synth_type1"/>
    <property type="match status" value="1"/>
</dbReference>
<dbReference type="InterPro" id="IPR045462">
    <property type="entry name" value="aa-tRNA-synth_I_cd-bd"/>
</dbReference>
<dbReference type="InterPro" id="IPR020751">
    <property type="entry name" value="aa-tRNA-synth_I_codon-bd_sub2"/>
</dbReference>
<dbReference type="InterPro" id="IPR001412">
    <property type="entry name" value="aa-tRNA-synth_I_CS"/>
</dbReference>
<dbReference type="InterPro" id="IPR008925">
    <property type="entry name" value="aa_tRNA-synth_I_cd-bd_sf"/>
</dbReference>
<dbReference type="InterPro" id="IPR004527">
    <property type="entry name" value="Glu-tRNA-ligase_bac/mito"/>
</dbReference>
<dbReference type="InterPro" id="IPR000924">
    <property type="entry name" value="Glu/Gln-tRNA-synth"/>
</dbReference>
<dbReference type="InterPro" id="IPR020058">
    <property type="entry name" value="Glu/Gln-tRNA-synth_Ib_cat-dom"/>
</dbReference>
<dbReference type="InterPro" id="IPR049940">
    <property type="entry name" value="GluQ/Sye"/>
</dbReference>
<dbReference type="InterPro" id="IPR014729">
    <property type="entry name" value="Rossmann-like_a/b/a_fold"/>
</dbReference>
<dbReference type="NCBIfam" id="TIGR00464">
    <property type="entry name" value="gltX_bact"/>
    <property type="match status" value="1"/>
</dbReference>
<dbReference type="PANTHER" id="PTHR43311">
    <property type="entry name" value="GLUTAMATE--TRNA LIGASE"/>
    <property type="match status" value="1"/>
</dbReference>
<dbReference type="PANTHER" id="PTHR43311:SF2">
    <property type="entry name" value="GLUTAMATE--TRNA LIGASE, MITOCHONDRIAL-RELATED"/>
    <property type="match status" value="1"/>
</dbReference>
<dbReference type="Pfam" id="PF19269">
    <property type="entry name" value="Anticodon_2"/>
    <property type="match status" value="1"/>
</dbReference>
<dbReference type="Pfam" id="PF00749">
    <property type="entry name" value="tRNA-synt_1c"/>
    <property type="match status" value="1"/>
</dbReference>
<dbReference type="PRINTS" id="PR00987">
    <property type="entry name" value="TRNASYNTHGLU"/>
</dbReference>
<dbReference type="SUPFAM" id="SSF48163">
    <property type="entry name" value="An anticodon-binding domain of class I aminoacyl-tRNA synthetases"/>
    <property type="match status" value="1"/>
</dbReference>
<dbReference type="SUPFAM" id="SSF52374">
    <property type="entry name" value="Nucleotidylyl transferase"/>
    <property type="match status" value="1"/>
</dbReference>
<dbReference type="PROSITE" id="PS00178">
    <property type="entry name" value="AA_TRNA_LIGASE_I"/>
    <property type="match status" value="1"/>
</dbReference>
<accession>B2UTI4</accession>
<evidence type="ECO:0000255" key="1">
    <source>
        <dbReference type="HAMAP-Rule" id="MF_00022"/>
    </source>
</evidence>
<name>SYE2_HELPS</name>
<comment type="function">
    <text evidence="1">Catalyzes the attachment of glutamate to tRNA(Glu) in a two-step reaction: glutamate is first activated by ATP to form Glu-AMP and then transferred to the acceptor end of tRNA(Glu).</text>
</comment>
<comment type="catalytic activity">
    <reaction evidence="1">
        <text>tRNA(Glu) + L-glutamate + ATP = L-glutamyl-tRNA(Glu) + AMP + diphosphate</text>
        <dbReference type="Rhea" id="RHEA:23540"/>
        <dbReference type="Rhea" id="RHEA-COMP:9663"/>
        <dbReference type="Rhea" id="RHEA-COMP:9680"/>
        <dbReference type="ChEBI" id="CHEBI:29985"/>
        <dbReference type="ChEBI" id="CHEBI:30616"/>
        <dbReference type="ChEBI" id="CHEBI:33019"/>
        <dbReference type="ChEBI" id="CHEBI:78442"/>
        <dbReference type="ChEBI" id="CHEBI:78520"/>
        <dbReference type="ChEBI" id="CHEBI:456215"/>
        <dbReference type="EC" id="6.1.1.17"/>
    </reaction>
</comment>
<comment type="subunit">
    <text evidence="1">Monomer.</text>
</comment>
<comment type="subcellular location">
    <subcellularLocation>
        <location evidence="1">Cytoplasm</location>
    </subcellularLocation>
</comment>
<comment type="similarity">
    <text evidence="1">Belongs to the class-I aminoacyl-tRNA synthetase family. Glutamate--tRNA ligase type 1 subfamily.</text>
</comment>
<gene>
    <name evidence="1" type="primary">gltX2</name>
    <name type="ordered locus">HPSH_03645</name>
</gene>
<keyword id="KW-0030">Aminoacyl-tRNA synthetase</keyword>
<keyword id="KW-0067">ATP-binding</keyword>
<keyword id="KW-0963">Cytoplasm</keyword>
<keyword id="KW-0436">Ligase</keyword>
<keyword id="KW-0547">Nucleotide-binding</keyword>
<keyword id="KW-0648">Protein biosynthesis</keyword>
<protein>
    <recommendedName>
        <fullName evidence="1">Glutamate--tRNA ligase 2</fullName>
        <ecNumber evidence="1">6.1.1.17</ecNumber>
    </recommendedName>
    <alternativeName>
        <fullName evidence="1">Glutamyl-tRNA synthetase 2</fullName>
        <shortName evidence="1">GluRS 2</shortName>
    </alternativeName>
</protein>
<feature type="chain" id="PRO_0000367688" description="Glutamate--tRNA ligase 2">
    <location>
        <begin position="1"/>
        <end position="439"/>
    </location>
</feature>
<feature type="short sequence motif" description="'HIGH' region" evidence="1">
    <location>
        <begin position="6"/>
        <end position="16"/>
    </location>
</feature>
<feature type="short sequence motif" description="'KMSKS' region" evidence="1">
    <location>
        <begin position="232"/>
        <end position="236"/>
    </location>
</feature>
<feature type="binding site" evidence="1">
    <location>
        <position position="235"/>
    </location>
    <ligand>
        <name>ATP</name>
        <dbReference type="ChEBI" id="CHEBI:30616"/>
    </ligand>
</feature>
<organism>
    <name type="scientific">Helicobacter pylori (strain Shi470)</name>
    <dbReference type="NCBI Taxonomy" id="512562"/>
    <lineage>
        <taxon>Bacteria</taxon>
        <taxon>Pseudomonadati</taxon>
        <taxon>Campylobacterota</taxon>
        <taxon>Epsilonproteobacteria</taxon>
        <taxon>Campylobacterales</taxon>
        <taxon>Helicobacteraceae</taxon>
        <taxon>Helicobacter</taxon>
    </lineage>
</organism>
<sequence length="439" mass="51265">MLRFAPSPTGDMHIGNLRAAIFNYIVAKQQHKPFLIRIEDTDKERNIEGKDQEILEILKLMGISWDKLVYQSRNIDYHREMAEKLLKENKAFYCYASTEFLEREKEKAKNEKRPFRYLDEWAALEKDKHHAPVVRLKAPNHAVSFNDAIKKEVEFEPYELDSFVLLRKDKSPTYNFACACDDLLYEISLIIRGEDHVSNTPKQILIQQALGSNNPIVYAHLPIILDETSGKKMSKRDEVSSVKWLLNQGFLPEAIVNYLITIGNKVPKEVFSLDEAIEWFDLENLSSSPAHFNLKYLKHLNHEHLKLLDDEKLLELILIKDKNLLGLLRLFIEECGTLLELKEKISLFLEPKDIVKTYENEDFKERCLVLFNALKSMDFQAYKDFESFKKEAMRLSQLKGKDFFKPLRILLTGNSHGVELPLIFPYIQSHHQKVLRLKA</sequence>